<reference key="1">
    <citation type="journal article" date="2011" name="J. Bacteriol.">
        <title>Genome of Ochrobactrum anthropi ATCC 49188 T, a versatile opportunistic pathogen and symbiont of several eukaryotic hosts.</title>
        <authorList>
            <person name="Chain P.S."/>
            <person name="Lang D.M."/>
            <person name="Comerci D.J."/>
            <person name="Malfatti S.A."/>
            <person name="Vergez L.M."/>
            <person name="Shin M."/>
            <person name="Ugalde R.A."/>
            <person name="Garcia E."/>
            <person name="Tolmasky M.E."/>
        </authorList>
    </citation>
    <scope>NUCLEOTIDE SEQUENCE [LARGE SCALE GENOMIC DNA]</scope>
    <source>
        <strain>ATCC 49188 / DSM 6882 / CCUG 24695 / JCM 21032 / LMG 3331 / NBRC 15819 / NCTC 12168 / Alc 37</strain>
    </source>
</reference>
<dbReference type="EC" id="2.1.3.15" evidence="1"/>
<dbReference type="EMBL" id="CP000758">
    <property type="protein sequence ID" value="ABS13627.1"/>
    <property type="molecule type" value="Genomic_DNA"/>
</dbReference>
<dbReference type="RefSeq" id="WP_010657619.1">
    <property type="nucleotide sequence ID" value="NC_009667.1"/>
</dbReference>
<dbReference type="SMR" id="A6WXC3"/>
<dbReference type="STRING" id="439375.Oant_0906"/>
<dbReference type="KEGG" id="oan:Oant_0906"/>
<dbReference type="eggNOG" id="COG0825">
    <property type="taxonomic scope" value="Bacteria"/>
</dbReference>
<dbReference type="HOGENOM" id="CLU_015486_0_2_5"/>
<dbReference type="PhylomeDB" id="A6WXC3"/>
<dbReference type="UniPathway" id="UPA00655">
    <property type="reaction ID" value="UER00711"/>
</dbReference>
<dbReference type="Proteomes" id="UP000002301">
    <property type="component" value="Chromosome 1"/>
</dbReference>
<dbReference type="GO" id="GO:0009317">
    <property type="term" value="C:acetyl-CoA carboxylase complex"/>
    <property type="evidence" value="ECO:0007669"/>
    <property type="project" value="InterPro"/>
</dbReference>
<dbReference type="GO" id="GO:0003989">
    <property type="term" value="F:acetyl-CoA carboxylase activity"/>
    <property type="evidence" value="ECO:0007669"/>
    <property type="project" value="InterPro"/>
</dbReference>
<dbReference type="GO" id="GO:0005524">
    <property type="term" value="F:ATP binding"/>
    <property type="evidence" value="ECO:0007669"/>
    <property type="project" value="UniProtKB-KW"/>
</dbReference>
<dbReference type="GO" id="GO:0016743">
    <property type="term" value="F:carboxyl- or carbamoyltransferase activity"/>
    <property type="evidence" value="ECO:0007669"/>
    <property type="project" value="UniProtKB-UniRule"/>
</dbReference>
<dbReference type="GO" id="GO:0006633">
    <property type="term" value="P:fatty acid biosynthetic process"/>
    <property type="evidence" value="ECO:0007669"/>
    <property type="project" value="UniProtKB-KW"/>
</dbReference>
<dbReference type="GO" id="GO:2001295">
    <property type="term" value="P:malonyl-CoA biosynthetic process"/>
    <property type="evidence" value="ECO:0007669"/>
    <property type="project" value="UniProtKB-UniRule"/>
</dbReference>
<dbReference type="Gene3D" id="3.90.226.10">
    <property type="entry name" value="2-enoyl-CoA Hydratase, Chain A, domain 1"/>
    <property type="match status" value="1"/>
</dbReference>
<dbReference type="HAMAP" id="MF_00823">
    <property type="entry name" value="AcetylCoA_CT_alpha"/>
    <property type="match status" value="1"/>
</dbReference>
<dbReference type="InterPro" id="IPR001095">
    <property type="entry name" value="Acetyl_CoA_COase_a_su"/>
</dbReference>
<dbReference type="InterPro" id="IPR029045">
    <property type="entry name" value="ClpP/crotonase-like_dom_sf"/>
</dbReference>
<dbReference type="InterPro" id="IPR011763">
    <property type="entry name" value="COA_CT_C"/>
</dbReference>
<dbReference type="NCBIfam" id="TIGR00513">
    <property type="entry name" value="accA"/>
    <property type="match status" value="1"/>
</dbReference>
<dbReference type="NCBIfam" id="NF041504">
    <property type="entry name" value="AccA_sub"/>
    <property type="match status" value="1"/>
</dbReference>
<dbReference type="NCBIfam" id="NF004344">
    <property type="entry name" value="PRK05724.1"/>
    <property type="match status" value="1"/>
</dbReference>
<dbReference type="PANTHER" id="PTHR42853">
    <property type="entry name" value="ACETYL-COENZYME A CARBOXYLASE CARBOXYL TRANSFERASE SUBUNIT ALPHA"/>
    <property type="match status" value="1"/>
</dbReference>
<dbReference type="PANTHER" id="PTHR42853:SF3">
    <property type="entry name" value="ACETYL-COENZYME A CARBOXYLASE CARBOXYL TRANSFERASE SUBUNIT ALPHA, CHLOROPLASTIC"/>
    <property type="match status" value="1"/>
</dbReference>
<dbReference type="Pfam" id="PF03255">
    <property type="entry name" value="ACCA"/>
    <property type="match status" value="1"/>
</dbReference>
<dbReference type="PRINTS" id="PR01069">
    <property type="entry name" value="ACCCTRFRASEA"/>
</dbReference>
<dbReference type="SUPFAM" id="SSF52096">
    <property type="entry name" value="ClpP/crotonase"/>
    <property type="match status" value="1"/>
</dbReference>
<dbReference type="PROSITE" id="PS50989">
    <property type="entry name" value="COA_CT_CTER"/>
    <property type="match status" value="1"/>
</dbReference>
<feature type="chain" id="PRO_1000062644" description="Acetyl-coenzyme A carboxylase carboxyl transferase subunit alpha">
    <location>
        <begin position="1"/>
        <end position="317"/>
    </location>
</feature>
<feature type="domain" description="CoA carboxyltransferase C-terminal" evidence="2">
    <location>
        <begin position="40"/>
        <end position="293"/>
    </location>
</feature>
<accession>A6WXC3</accession>
<proteinExistence type="inferred from homology"/>
<gene>
    <name evidence="1" type="primary">accA</name>
    <name type="ordered locus">Oant_0906</name>
</gene>
<sequence length="317" mass="35148">MYNYLDFEKPVADLEGQILELKKLAQEQGSVEMSDEIRRLEKRSADALKDIYRKLTPWQKTQIARHPDRPHCLEYIDRLFTEFTPLAGDRKFANDEALQTGFGRFNGQAVAIIGQEKGSDTKTRLKHNFGSARPEGYRKAVRIMEMADRFQLPLITFVDTAGAYPGVSAEERGQAEAIARSTAECLRLRVPVISIIIGEGGSGGAIAIAVANRVYMLEHSIYSVISPEGAASILWHDSTRAKDAASSMRITAQDLFDLKVIDGVIPEPMGGAHRGKEAVIDAAGDIITASLRSMKDIDGETLKQERRQKFLEIGRNI</sequence>
<evidence type="ECO:0000255" key="1">
    <source>
        <dbReference type="HAMAP-Rule" id="MF_00823"/>
    </source>
</evidence>
<evidence type="ECO:0000255" key="2">
    <source>
        <dbReference type="PROSITE-ProRule" id="PRU01137"/>
    </source>
</evidence>
<name>ACCA_BRUA4</name>
<protein>
    <recommendedName>
        <fullName evidence="1">Acetyl-coenzyme A carboxylase carboxyl transferase subunit alpha</fullName>
        <shortName evidence="1">ACCase subunit alpha</shortName>
        <shortName evidence="1">Acetyl-CoA carboxylase carboxyltransferase subunit alpha</shortName>
        <ecNumber evidence="1">2.1.3.15</ecNumber>
    </recommendedName>
</protein>
<organism>
    <name type="scientific">Brucella anthropi (strain ATCC 49188 / DSM 6882 / CCUG 24695 / JCM 21032 / LMG 3331 / NBRC 15819 / NCTC 12168 / Alc 37)</name>
    <name type="common">Ochrobactrum anthropi</name>
    <dbReference type="NCBI Taxonomy" id="439375"/>
    <lineage>
        <taxon>Bacteria</taxon>
        <taxon>Pseudomonadati</taxon>
        <taxon>Pseudomonadota</taxon>
        <taxon>Alphaproteobacteria</taxon>
        <taxon>Hyphomicrobiales</taxon>
        <taxon>Brucellaceae</taxon>
        <taxon>Brucella/Ochrobactrum group</taxon>
        <taxon>Brucella</taxon>
    </lineage>
</organism>
<comment type="function">
    <text evidence="1">Component of the acetyl coenzyme A carboxylase (ACC) complex. First, biotin carboxylase catalyzes the carboxylation of biotin on its carrier protein (BCCP) and then the CO(2) group is transferred by the carboxyltransferase to acetyl-CoA to form malonyl-CoA.</text>
</comment>
<comment type="catalytic activity">
    <reaction evidence="1">
        <text>N(6)-carboxybiotinyl-L-lysyl-[protein] + acetyl-CoA = N(6)-biotinyl-L-lysyl-[protein] + malonyl-CoA</text>
        <dbReference type="Rhea" id="RHEA:54728"/>
        <dbReference type="Rhea" id="RHEA-COMP:10505"/>
        <dbReference type="Rhea" id="RHEA-COMP:10506"/>
        <dbReference type="ChEBI" id="CHEBI:57288"/>
        <dbReference type="ChEBI" id="CHEBI:57384"/>
        <dbReference type="ChEBI" id="CHEBI:83144"/>
        <dbReference type="ChEBI" id="CHEBI:83145"/>
        <dbReference type="EC" id="2.1.3.15"/>
    </reaction>
</comment>
<comment type="pathway">
    <text evidence="1">Lipid metabolism; malonyl-CoA biosynthesis; malonyl-CoA from acetyl-CoA: step 1/1.</text>
</comment>
<comment type="subunit">
    <text evidence="1">Acetyl-CoA carboxylase is a heterohexamer composed of biotin carboxyl carrier protein (AccB), biotin carboxylase (AccC) and two subunits each of ACCase subunit alpha (AccA) and ACCase subunit beta (AccD).</text>
</comment>
<comment type="subcellular location">
    <subcellularLocation>
        <location evidence="1">Cytoplasm</location>
    </subcellularLocation>
</comment>
<comment type="similarity">
    <text evidence="1">Belongs to the AccA family.</text>
</comment>
<keyword id="KW-0067">ATP-binding</keyword>
<keyword id="KW-0963">Cytoplasm</keyword>
<keyword id="KW-0275">Fatty acid biosynthesis</keyword>
<keyword id="KW-0276">Fatty acid metabolism</keyword>
<keyword id="KW-0444">Lipid biosynthesis</keyword>
<keyword id="KW-0443">Lipid metabolism</keyword>
<keyword id="KW-0547">Nucleotide-binding</keyword>
<keyword id="KW-1185">Reference proteome</keyword>
<keyword id="KW-0808">Transferase</keyword>